<sequence>MTETYIKNTSKDLTSAIRGQLTYDDKVIEKIVGLALENVDGLLGVNGGFFANLKDKLVNTESVRDGVNVEVGKKQVAVDLDIVAEYQKHVPTIYDSIKSIVEEEVKRMTDLDVIEVNVKVVDIKTKEQFEAEKVSLQDKVSDMARSTSEFTSHQVENVKASVDNGVEKLQDQKAEPRVK</sequence>
<dbReference type="EMBL" id="BA000034">
    <property type="protein sequence ID" value="BAC64192.1"/>
    <property type="molecule type" value="Genomic_DNA"/>
</dbReference>
<dbReference type="RefSeq" id="WP_002984475.1">
    <property type="nucleotide sequence ID" value="NC_004606.1"/>
</dbReference>
<dbReference type="KEGG" id="sps:SPs1097"/>
<dbReference type="HOGENOM" id="CLU_113198_1_1_9"/>
<dbReference type="InterPro" id="IPR005531">
    <property type="entry name" value="Asp23"/>
</dbReference>
<dbReference type="PANTHER" id="PTHR34297:SF3">
    <property type="entry name" value="ALKALINE SHOCK PROTEIN 23"/>
    <property type="match status" value="1"/>
</dbReference>
<dbReference type="PANTHER" id="PTHR34297">
    <property type="entry name" value="HYPOTHETICAL CYTOSOLIC PROTEIN-RELATED"/>
    <property type="match status" value="1"/>
</dbReference>
<dbReference type="Pfam" id="PF03780">
    <property type="entry name" value="Asp23"/>
    <property type="match status" value="1"/>
</dbReference>
<evidence type="ECO:0000256" key="1">
    <source>
        <dbReference type="SAM" id="MobiDB-lite"/>
    </source>
</evidence>
<evidence type="ECO:0000305" key="2"/>
<gene>
    <name type="ordered locus">SPs1097</name>
</gene>
<proteinExistence type="inferred from homology"/>
<name>GLS24_STRPQ</name>
<accession>P0CZ87</accession>
<accession>Q79X29</accession>
<accession>Q7CF25</accession>
<reference key="1">
    <citation type="journal article" date="2003" name="Genome Res.">
        <title>Genome sequence of an M3 strain of Streptococcus pyogenes reveals a large-scale genomic rearrangement in invasive strains and new insights into phage evolution.</title>
        <authorList>
            <person name="Nakagawa I."/>
            <person name="Kurokawa K."/>
            <person name="Yamashita A."/>
            <person name="Nakata M."/>
            <person name="Tomiyasu Y."/>
            <person name="Okahashi N."/>
            <person name="Kawabata S."/>
            <person name="Yamazaki K."/>
            <person name="Shiba T."/>
            <person name="Yasunaga T."/>
            <person name="Hayashi H."/>
            <person name="Hattori M."/>
            <person name="Hamada S."/>
        </authorList>
    </citation>
    <scope>NUCLEOTIDE SEQUENCE [LARGE SCALE GENOMIC DNA]</scope>
    <source>
        <strain>SSI-1</strain>
    </source>
</reference>
<organism>
    <name type="scientific">Streptococcus pyogenes serotype M3 (strain SSI-1)</name>
    <dbReference type="NCBI Taxonomy" id="193567"/>
    <lineage>
        <taxon>Bacteria</taxon>
        <taxon>Bacillati</taxon>
        <taxon>Bacillota</taxon>
        <taxon>Bacilli</taxon>
        <taxon>Lactobacillales</taxon>
        <taxon>Streptococcaceae</taxon>
        <taxon>Streptococcus</taxon>
    </lineage>
</organism>
<protein>
    <recommendedName>
        <fullName>Stress response regulator gls24 homolog</fullName>
    </recommendedName>
</protein>
<feature type="chain" id="PRO_0000411281" description="Stress response regulator gls24 homolog">
    <location>
        <begin position="1"/>
        <end position="179"/>
    </location>
</feature>
<feature type="region of interest" description="Disordered" evidence="1">
    <location>
        <begin position="147"/>
        <end position="179"/>
    </location>
</feature>
<feature type="compositionally biased region" description="Basic and acidic residues" evidence="1">
    <location>
        <begin position="165"/>
        <end position="179"/>
    </location>
</feature>
<comment type="similarity">
    <text evidence="2">Belongs to the asp23 family.</text>
</comment>